<keyword id="KW-0325">Glycoprotein</keyword>
<keyword id="KW-0472">Membrane</keyword>
<keyword id="KW-1185">Reference proteome</keyword>
<keyword id="KW-0812">Transmembrane</keyword>
<keyword id="KW-1133">Transmembrane helix</keyword>
<sequence>MFRVSNFMVGLANTLVMLVGASAIGYSIYMFVHQGVTDCESAIRIPLLTTGLILFLVSLLGVIGSCFKENLAMVSYLIILFGGIVALMIFSIFLFFVTNKGAGRVVSGRGYKEYRTVDFSTWLNGFVGGKRWVGIRSCLAEANVCDDLSDGRVSQIADAFYHKNLSPIQSGCCKPPSDCNFEFRNATFWIPPSKNETAVAENGDCGTWSNVQTELCFNCNACKAGVLANIREKWRNLLVFNICLLILLITVYSCGCCARRNNRTARKSDSV</sequence>
<organism>
    <name type="scientific">Arabidopsis thaliana</name>
    <name type="common">Mouse-ear cress</name>
    <dbReference type="NCBI Taxonomy" id="3702"/>
    <lineage>
        <taxon>Eukaryota</taxon>
        <taxon>Viridiplantae</taxon>
        <taxon>Streptophyta</taxon>
        <taxon>Embryophyta</taxon>
        <taxon>Tracheophyta</taxon>
        <taxon>Spermatophyta</taxon>
        <taxon>Magnoliopsida</taxon>
        <taxon>eudicotyledons</taxon>
        <taxon>Gunneridae</taxon>
        <taxon>Pentapetalae</taxon>
        <taxon>rosids</taxon>
        <taxon>malvids</taxon>
        <taxon>Brassicales</taxon>
        <taxon>Brassicaceae</taxon>
        <taxon>Camelineae</taxon>
        <taxon>Arabidopsis</taxon>
    </lineage>
</organism>
<evidence type="ECO:0000250" key="1"/>
<evidence type="ECO:0000255" key="2"/>
<evidence type="ECO:0000305" key="3"/>
<accession>Q9LPR6</accession>
<accession>A0ME76</accession>
<accession>Q8LAM6</accession>
<reference key="1">
    <citation type="journal article" date="2000" name="Nature">
        <title>Sequence and analysis of chromosome 1 of the plant Arabidopsis thaliana.</title>
        <authorList>
            <person name="Theologis A."/>
            <person name="Ecker J.R."/>
            <person name="Palm C.J."/>
            <person name="Federspiel N.A."/>
            <person name="Kaul S."/>
            <person name="White O."/>
            <person name="Alonso J."/>
            <person name="Altafi H."/>
            <person name="Araujo R."/>
            <person name="Bowman C.L."/>
            <person name="Brooks S.Y."/>
            <person name="Buehler E."/>
            <person name="Chan A."/>
            <person name="Chao Q."/>
            <person name="Chen H."/>
            <person name="Cheuk R.F."/>
            <person name="Chin C.W."/>
            <person name="Chung M.K."/>
            <person name="Conn L."/>
            <person name="Conway A.B."/>
            <person name="Conway A.R."/>
            <person name="Creasy T.H."/>
            <person name="Dewar K."/>
            <person name="Dunn P."/>
            <person name="Etgu P."/>
            <person name="Feldblyum T.V."/>
            <person name="Feng J.-D."/>
            <person name="Fong B."/>
            <person name="Fujii C.Y."/>
            <person name="Gill J.E."/>
            <person name="Goldsmith A.D."/>
            <person name="Haas B."/>
            <person name="Hansen N.F."/>
            <person name="Hughes B."/>
            <person name="Huizar L."/>
            <person name="Hunter J.L."/>
            <person name="Jenkins J."/>
            <person name="Johnson-Hopson C."/>
            <person name="Khan S."/>
            <person name="Khaykin E."/>
            <person name="Kim C.J."/>
            <person name="Koo H.L."/>
            <person name="Kremenetskaia I."/>
            <person name="Kurtz D.B."/>
            <person name="Kwan A."/>
            <person name="Lam B."/>
            <person name="Langin-Hooper S."/>
            <person name="Lee A."/>
            <person name="Lee J.M."/>
            <person name="Lenz C.A."/>
            <person name="Li J.H."/>
            <person name="Li Y.-P."/>
            <person name="Lin X."/>
            <person name="Liu S.X."/>
            <person name="Liu Z.A."/>
            <person name="Luros J.S."/>
            <person name="Maiti R."/>
            <person name="Marziali A."/>
            <person name="Militscher J."/>
            <person name="Miranda M."/>
            <person name="Nguyen M."/>
            <person name="Nierman W.C."/>
            <person name="Osborne B.I."/>
            <person name="Pai G."/>
            <person name="Peterson J."/>
            <person name="Pham P.K."/>
            <person name="Rizzo M."/>
            <person name="Rooney T."/>
            <person name="Rowley D."/>
            <person name="Sakano H."/>
            <person name="Salzberg S.L."/>
            <person name="Schwartz J.R."/>
            <person name="Shinn P."/>
            <person name="Southwick A.M."/>
            <person name="Sun H."/>
            <person name="Tallon L.J."/>
            <person name="Tambunga G."/>
            <person name="Toriumi M.J."/>
            <person name="Town C.D."/>
            <person name="Utterback T."/>
            <person name="Van Aken S."/>
            <person name="Vaysberg M."/>
            <person name="Vysotskaia V.S."/>
            <person name="Walker M."/>
            <person name="Wu D."/>
            <person name="Yu G."/>
            <person name="Fraser C.M."/>
            <person name="Venter J.C."/>
            <person name="Davis R.W."/>
        </authorList>
    </citation>
    <scope>NUCLEOTIDE SEQUENCE [LARGE SCALE GENOMIC DNA]</scope>
    <source>
        <strain>cv. Columbia</strain>
    </source>
</reference>
<reference key="2">
    <citation type="journal article" date="2017" name="Plant J.">
        <title>Araport11: a complete reannotation of the Arabidopsis thaliana reference genome.</title>
        <authorList>
            <person name="Cheng C.Y."/>
            <person name="Krishnakumar V."/>
            <person name="Chan A.P."/>
            <person name="Thibaud-Nissen F."/>
            <person name="Schobel S."/>
            <person name="Town C.D."/>
        </authorList>
    </citation>
    <scope>GENOME REANNOTATION</scope>
    <source>
        <strain>cv. Columbia</strain>
    </source>
</reference>
<reference key="3">
    <citation type="journal article" date="2006" name="Plant Biotechnol. J.">
        <title>Simultaneous high-throughput recombinational cloning of open reading frames in closed and open configurations.</title>
        <authorList>
            <person name="Underwood B.A."/>
            <person name="Vanderhaeghen R."/>
            <person name="Whitford R."/>
            <person name="Town C.D."/>
            <person name="Hilson P."/>
        </authorList>
    </citation>
    <scope>NUCLEOTIDE SEQUENCE [LARGE SCALE MRNA]</scope>
    <source>
        <strain>cv. Columbia</strain>
    </source>
</reference>
<reference key="4">
    <citation type="submission" date="2002-03" db="EMBL/GenBank/DDBJ databases">
        <title>Full-length cDNA from Arabidopsis thaliana.</title>
        <authorList>
            <person name="Brover V.V."/>
            <person name="Troukhan M.E."/>
            <person name="Alexandrov N.A."/>
            <person name="Lu Y.-P."/>
            <person name="Flavell R.B."/>
            <person name="Feldmann K.A."/>
        </authorList>
    </citation>
    <scope>NUCLEOTIDE SEQUENCE [LARGE SCALE MRNA]</scope>
</reference>
<comment type="function">
    <text evidence="1">May be involved in the regulation of cell differentiation.</text>
</comment>
<comment type="subcellular location">
    <subcellularLocation>
        <location evidence="1">Membrane</location>
        <topology evidence="3">Multi-pass membrane protein</topology>
    </subcellularLocation>
</comment>
<comment type="similarity">
    <text evidence="3">Belongs to the tetraspanin (TM4SF) family.</text>
</comment>
<comment type="sequence caution" evidence="3">
    <conflict type="erroneous termination">
        <sequence resource="EMBL-CDS" id="ABK28403"/>
    </conflict>
    <text>Extended C-terminus.</text>
</comment>
<proteinExistence type="evidence at transcript level"/>
<name>TET11_ARATH</name>
<protein>
    <recommendedName>
        <fullName>Tetraspanin-11</fullName>
    </recommendedName>
</protein>
<dbReference type="EMBL" id="AC013354">
    <property type="protein sequence ID" value="AAF26004.1"/>
    <property type="molecule type" value="Genomic_DNA"/>
</dbReference>
<dbReference type="EMBL" id="CP002684">
    <property type="protein sequence ID" value="AEE29725.1"/>
    <property type="molecule type" value="Genomic_DNA"/>
</dbReference>
<dbReference type="EMBL" id="DQ446262">
    <property type="protein sequence ID" value="ABE65632.1"/>
    <property type="molecule type" value="mRNA"/>
</dbReference>
<dbReference type="EMBL" id="DQ652844">
    <property type="protein sequence ID" value="ABK28403.1"/>
    <property type="status" value="ALT_SEQ"/>
    <property type="molecule type" value="mRNA"/>
</dbReference>
<dbReference type="EMBL" id="AY087722">
    <property type="protein sequence ID" value="AAM65259.1"/>
    <property type="molecule type" value="mRNA"/>
</dbReference>
<dbReference type="RefSeq" id="NP_564056.1">
    <property type="nucleotide sequence ID" value="NM_101710.3"/>
</dbReference>
<dbReference type="BioGRID" id="23672">
    <property type="interactions" value="33"/>
</dbReference>
<dbReference type="FunCoup" id="Q9LPR6">
    <property type="interactions" value="93"/>
</dbReference>
<dbReference type="IntAct" id="Q9LPR6">
    <property type="interactions" value="28"/>
</dbReference>
<dbReference type="STRING" id="3702.Q9LPR6"/>
<dbReference type="GlyCosmos" id="Q9LPR6">
    <property type="glycosylation" value="2 sites, No reported glycans"/>
</dbReference>
<dbReference type="GlyGen" id="Q9LPR6">
    <property type="glycosylation" value="2 sites"/>
</dbReference>
<dbReference type="PaxDb" id="3702-AT1G18520.1"/>
<dbReference type="ProteomicsDB" id="232813"/>
<dbReference type="EnsemblPlants" id="AT1G18520.1">
    <property type="protein sequence ID" value="AT1G18520.1"/>
    <property type="gene ID" value="AT1G18520"/>
</dbReference>
<dbReference type="GeneID" id="838433"/>
<dbReference type="Gramene" id="AT1G18520.1">
    <property type="protein sequence ID" value="AT1G18520.1"/>
    <property type="gene ID" value="AT1G18520"/>
</dbReference>
<dbReference type="KEGG" id="ath:AT1G18520"/>
<dbReference type="Araport" id="AT1G18520"/>
<dbReference type="TAIR" id="AT1G18520">
    <property type="gene designation" value="TET11"/>
</dbReference>
<dbReference type="eggNOG" id="ENOG502QTNI">
    <property type="taxonomic scope" value="Eukaryota"/>
</dbReference>
<dbReference type="HOGENOM" id="CLU_066970_0_0_1"/>
<dbReference type="InParanoid" id="Q9LPR6"/>
<dbReference type="OMA" id="SCMIDAK"/>
<dbReference type="PhylomeDB" id="Q9LPR6"/>
<dbReference type="PRO" id="PR:Q9LPR6"/>
<dbReference type="Proteomes" id="UP000006548">
    <property type="component" value="Chromosome 1"/>
</dbReference>
<dbReference type="ExpressionAtlas" id="Q9LPR6">
    <property type="expression patterns" value="baseline and differential"/>
</dbReference>
<dbReference type="GO" id="GO:0016020">
    <property type="term" value="C:membrane"/>
    <property type="evidence" value="ECO:0007669"/>
    <property type="project" value="UniProtKB-SubCell"/>
</dbReference>
<dbReference type="GO" id="GO:0009734">
    <property type="term" value="P:auxin-activated signaling pathway"/>
    <property type="evidence" value="ECO:0007669"/>
    <property type="project" value="InterPro"/>
</dbReference>
<dbReference type="InterPro" id="IPR044991">
    <property type="entry name" value="TET_plant"/>
</dbReference>
<dbReference type="InterPro" id="IPR018499">
    <property type="entry name" value="Tetraspanin/Peripherin"/>
</dbReference>
<dbReference type="PANTHER" id="PTHR32191">
    <property type="entry name" value="TETRASPANIN-8-RELATED"/>
    <property type="match status" value="1"/>
</dbReference>
<dbReference type="Pfam" id="PF00335">
    <property type="entry name" value="Tetraspanin"/>
    <property type="match status" value="1"/>
</dbReference>
<gene>
    <name type="primary">TET11</name>
    <name type="ordered locus">At1g18520</name>
    <name type="ORF">F15H18.1</name>
</gene>
<feature type="chain" id="PRO_0000421051" description="Tetraspanin-11">
    <location>
        <begin position="1"/>
        <end position="271"/>
    </location>
</feature>
<feature type="topological domain" description="Cytoplasmic" evidence="2">
    <location>
        <begin position="1"/>
        <end position="7"/>
    </location>
</feature>
<feature type="transmembrane region" description="Helical" evidence="2">
    <location>
        <begin position="8"/>
        <end position="28"/>
    </location>
</feature>
<feature type="topological domain" description="Extracellular" evidence="2">
    <location>
        <begin position="29"/>
        <end position="44"/>
    </location>
</feature>
<feature type="transmembrane region" description="Helical" evidence="2">
    <location>
        <begin position="45"/>
        <end position="65"/>
    </location>
</feature>
<feature type="topological domain" description="Cytoplasmic" evidence="2">
    <location>
        <begin position="66"/>
        <end position="76"/>
    </location>
</feature>
<feature type="transmembrane region" description="Helical" evidence="2">
    <location>
        <begin position="77"/>
        <end position="97"/>
    </location>
</feature>
<feature type="topological domain" description="Extracellular" evidence="2">
    <location>
        <begin position="98"/>
        <end position="236"/>
    </location>
</feature>
<feature type="transmembrane region" description="Helical" evidence="2">
    <location>
        <begin position="237"/>
        <end position="257"/>
    </location>
</feature>
<feature type="topological domain" description="Cytoplasmic" evidence="2">
    <location>
        <begin position="258"/>
        <end position="271"/>
    </location>
</feature>
<feature type="glycosylation site" description="N-linked (GlcNAc...) asparagine" evidence="2">
    <location>
        <position position="185"/>
    </location>
</feature>
<feature type="glycosylation site" description="N-linked (GlcNAc...) asparagine" evidence="2">
    <location>
        <position position="195"/>
    </location>
</feature>
<feature type="sequence conflict" description="In Ref. 4; AAM65259." evidence="3" ref="4">
    <original>M</original>
    <variation>V</variation>
    <location>
        <position position="8"/>
    </location>
</feature>
<feature type="sequence conflict" description="In Ref. 4; AAM65259." evidence="3" ref="4">
    <original>V</original>
    <variation>VA</variation>
    <location>
        <position position="199"/>
    </location>
</feature>
<feature type="sequence conflict" description="In Ref. 4; AAM65259." evidence="3" ref="4">
    <original>A</original>
    <variation>T</variation>
    <location>
        <position position="228"/>
    </location>
</feature>